<reference key="1">
    <citation type="journal article" date="2008" name="J. Bacteriol.">
        <title>Genome sequence of the chemolithoautotrophic bacterium Oligotropha carboxidovorans OM5T.</title>
        <authorList>
            <person name="Paul D."/>
            <person name="Bridges S."/>
            <person name="Burgess S.C."/>
            <person name="Dandass Y."/>
            <person name="Lawrence M.L."/>
        </authorList>
    </citation>
    <scope>NUCLEOTIDE SEQUENCE [LARGE SCALE GENOMIC DNA]</scope>
    <source>
        <strain>ATCC 49405 / DSM 1227 / KCTC 32145 / OM5</strain>
    </source>
</reference>
<reference key="2">
    <citation type="journal article" date="2011" name="J. Bacteriol.">
        <title>Complete genome sequences of the chemolithoautotrophic Oligotropha carboxidovorans strains OM4 and OM5.</title>
        <authorList>
            <person name="Volland S."/>
            <person name="Rachinger M."/>
            <person name="Strittmatter A."/>
            <person name="Daniel R."/>
            <person name="Gottschalk G."/>
            <person name="Meyer O."/>
        </authorList>
    </citation>
    <scope>NUCLEOTIDE SEQUENCE [LARGE SCALE GENOMIC DNA]</scope>
    <source>
        <strain>ATCC 49405 / DSM 1227 / KCTC 32145 / OM5</strain>
    </source>
</reference>
<accession>B6JGU6</accession>
<accession>F8BX40</accession>
<feature type="chain" id="PRO_1000115561" description="Trigger factor">
    <location>
        <begin position="1"/>
        <end position="452"/>
    </location>
</feature>
<feature type="domain" description="PPIase FKBP-type" evidence="1">
    <location>
        <begin position="171"/>
        <end position="256"/>
    </location>
</feature>
<gene>
    <name evidence="1" type="primary">tig</name>
    <name type="ordered locus">OCAR_5907</name>
    <name type="ordered locus">OCA5_c21120</name>
</gene>
<proteinExistence type="inferred from homology"/>
<organism>
    <name type="scientific">Afipia carboxidovorans (strain ATCC 49405 / DSM 1227 / KCTC 32145 / OM5)</name>
    <name type="common">Oligotropha carboxidovorans</name>
    <dbReference type="NCBI Taxonomy" id="504832"/>
    <lineage>
        <taxon>Bacteria</taxon>
        <taxon>Pseudomonadati</taxon>
        <taxon>Pseudomonadota</taxon>
        <taxon>Alphaproteobacteria</taxon>
        <taxon>Hyphomicrobiales</taxon>
        <taxon>Nitrobacteraceae</taxon>
        <taxon>Afipia</taxon>
    </lineage>
</organism>
<protein>
    <recommendedName>
        <fullName evidence="1">Trigger factor</fullName>
        <shortName evidence="1">TF</shortName>
        <ecNumber evidence="1">5.2.1.8</ecNumber>
    </recommendedName>
    <alternativeName>
        <fullName evidence="1">PPIase</fullName>
    </alternativeName>
</protein>
<sequence length="452" mass="50311">MQVNETLSEGLKHEFQISIPAAEIDAKVNERLAGMKDKVRLNGFRPGKVPVAHLKKVYGKSVAAETLEETIRETNQKIFTDRGFRLANEAKVTMPTDQAEIEGILDGKKDLTYSVAIEVVPPITLADFKTFKVEKLVADVTDAEVDDAIKRIADQNRPYAPKSEGAKAENGDRVTLAFKGTIDGEAFEGGSGENIPLVLGSNSFIPGFEDQLTGIGVGETRVIKVPFPKNYGAAHLAGKDAEFETTATLIEAPQDATIDDEFAKTLGVESLDKLKEAMRERLTQEYAGATRQKLKRELLDRLDETHKFDPPESLVNDEFDLMWKSIHAEMESAGKTFADEDTTEDEAKTEYRKIADRRVRLGLVLSEIGDKNKITVTDDEVSRAVIERARQMPGREKEVWDYYRSNPGAVAQLRAPIFEDKVVDFILELAEVSEKKVSREELFKEEDDKAAA</sequence>
<keyword id="KW-0131">Cell cycle</keyword>
<keyword id="KW-0132">Cell division</keyword>
<keyword id="KW-0143">Chaperone</keyword>
<keyword id="KW-0963">Cytoplasm</keyword>
<keyword id="KW-0413">Isomerase</keyword>
<keyword id="KW-1185">Reference proteome</keyword>
<keyword id="KW-0697">Rotamase</keyword>
<comment type="function">
    <text evidence="1">Involved in protein export. Acts as a chaperone by maintaining the newly synthesized protein in an open conformation. Functions as a peptidyl-prolyl cis-trans isomerase.</text>
</comment>
<comment type="catalytic activity">
    <reaction evidence="1">
        <text>[protein]-peptidylproline (omega=180) = [protein]-peptidylproline (omega=0)</text>
        <dbReference type="Rhea" id="RHEA:16237"/>
        <dbReference type="Rhea" id="RHEA-COMP:10747"/>
        <dbReference type="Rhea" id="RHEA-COMP:10748"/>
        <dbReference type="ChEBI" id="CHEBI:83833"/>
        <dbReference type="ChEBI" id="CHEBI:83834"/>
        <dbReference type="EC" id="5.2.1.8"/>
    </reaction>
</comment>
<comment type="subcellular location">
    <subcellularLocation>
        <location>Cytoplasm</location>
    </subcellularLocation>
    <text evidence="1">About half TF is bound to the ribosome near the polypeptide exit tunnel while the other half is free in the cytoplasm.</text>
</comment>
<comment type="domain">
    <text evidence="1">Consists of 3 domains; the N-terminus binds the ribosome, the middle domain has PPIase activity, while the C-terminus has intrinsic chaperone activity on its own.</text>
</comment>
<comment type="similarity">
    <text evidence="1">Belongs to the FKBP-type PPIase family. Tig subfamily.</text>
</comment>
<name>TIG_AFIC5</name>
<evidence type="ECO:0000255" key="1">
    <source>
        <dbReference type="HAMAP-Rule" id="MF_00303"/>
    </source>
</evidence>
<dbReference type="EC" id="5.2.1.8" evidence="1"/>
<dbReference type="EMBL" id="CP001196">
    <property type="protein sequence ID" value="ACI93030.1"/>
    <property type="molecule type" value="Genomic_DNA"/>
</dbReference>
<dbReference type="EMBL" id="CP002826">
    <property type="protein sequence ID" value="AEI06817.1"/>
    <property type="molecule type" value="Genomic_DNA"/>
</dbReference>
<dbReference type="RefSeq" id="WP_012563057.1">
    <property type="nucleotide sequence ID" value="NC_015684.1"/>
</dbReference>
<dbReference type="SMR" id="B6JGU6"/>
<dbReference type="STRING" id="504832.OCA5_c21120"/>
<dbReference type="KEGG" id="oca:OCAR_5907"/>
<dbReference type="KEGG" id="ocg:OCA5_c21120"/>
<dbReference type="PATRIC" id="fig|504832.7.peg.2233"/>
<dbReference type="eggNOG" id="COG0544">
    <property type="taxonomic scope" value="Bacteria"/>
</dbReference>
<dbReference type="HOGENOM" id="CLU_033058_2_2_5"/>
<dbReference type="OrthoDB" id="9767721at2"/>
<dbReference type="Proteomes" id="UP000007730">
    <property type="component" value="Chromosome"/>
</dbReference>
<dbReference type="GO" id="GO:0005737">
    <property type="term" value="C:cytoplasm"/>
    <property type="evidence" value="ECO:0007669"/>
    <property type="project" value="UniProtKB-SubCell"/>
</dbReference>
<dbReference type="GO" id="GO:0003755">
    <property type="term" value="F:peptidyl-prolyl cis-trans isomerase activity"/>
    <property type="evidence" value="ECO:0007669"/>
    <property type="project" value="UniProtKB-UniRule"/>
</dbReference>
<dbReference type="GO" id="GO:0044183">
    <property type="term" value="F:protein folding chaperone"/>
    <property type="evidence" value="ECO:0007669"/>
    <property type="project" value="TreeGrafter"/>
</dbReference>
<dbReference type="GO" id="GO:0043022">
    <property type="term" value="F:ribosome binding"/>
    <property type="evidence" value="ECO:0007669"/>
    <property type="project" value="TreeGrafter"/>
</dbReference>
<dbReference type="GO" id="GO:0051083">
    <property type="term" value="P:'de novo' cotranslational protein folding"/>
    <property type="evidence" value="ECO:0007669"/>
    <property type="project" value="TreeGrafter"/>
</dbReference>
<dbReference type="GO" id="GO:0051301">
    <property type="term" value="P:cell division"/>
    <property type="evidence" value="ECO:0007669"/>
    <property type="project" value="UniProtKB-KW"/>
</dbReference>
<dbReference type="GO" id="GO:0061077">
    <property type="term" value="P:chaperone-mediated protein folding"/>
    <property type="evidence" value="ECO:0007669"/>
    <property type="project" value="TreeGrafter"/>
</dbReference>
<dbReference type="GO" id="GO:0015031">
    <property type="term" value="P:protein transport"/>
    <property type="evidence" value="ECO:0007669"/>
    <property type="project" value="UniProtKB-UniRule"/>
</dbReference>
<dbReference type="GO" id="GO:0043335">
    <property type="term" value="P:protein unfolding"/>
    <property type="evidence" value="ECO:0007669"/>
    <property type="project" value="TreeGrafter"/>
</dbReference>
<dbReference type="FunFam" id="3.10.50.40:FF:000001">
    <property type="entry name" value="Trigger factor"/>
    <property type="match status" value="1"/>
</dbReference>
<dbReference type="Gene3D" id="3.10.50.40">
    <property type="match status" value="1"/>
</dbReference>
<dbReference type="Gene3D" id="3.30.70.1050">
    <property type="entry name" value="Trigger factor ribosome-binding domain"/>
    <property type="match status" value="1"/>
</dbReference>
<dbReference type="Gene3D" id="1.10.3120.10">
    <property type="entry name" value="Trigger factor, C-terminal domain"/>
    <property type="match status" value="1"/>
</dbReference>
<dbReference type="HAMAP" id="MF_00303">
    <property type="entry name" value="Trigger_factor_Tig"/>
    <property type="match status" value="1"/>
</dbReference>
<dbReference type="InterPro" id="IPR046357">
    <property type="entry name" value="PPIase_dom_sf"/>
</dbReference>
<dbReference type="InterPro" id="IPR001179">
    <property type="entry name" value="PPIase_FKBP_dom"/>
</dbReference>
<dbReference type="InterPro" id="IPR005215">
    <property type="entry name" value="Trig_fac"/>
</dbReference>
<dbReference type="InterPro" id="IPR008880">
    <property type="entry name" value="Trigger_fac_C"/>
</dbReference>
<dbReference type="InterPro" id="IPR037041">
    <property type="entry name" value="Trigger_fac_C_sf"/>
</dbReference>
<dbReference type="InterPro" id="IPR008881">
    <property type="entry name" value="Trigger_fac_ribosome-bd_bac"/>
</dbReference>
<dbReference type="InterPro" id="IPR036611">
    <property type="entry name" value="Trigger_fac_ribosome-bd_sf"/>
</dbReference>
<dbReference type="InterPro" id="IPR027304">
    <property type="entry name" value="Trigger_fact/SurA_dom_sf"/>
</dbReference>
<dbReference type="NCBIfam" id="TIGR00115">
    <property type="entry name" value="tig"/>
    <property type="match status" value="1"/>
</dbReference>
<dbReference type="PANTHER" id="PTHR30560">
    <property type="entry name" value="TRIGGER FACTOR CHAPERONE AND PEPTIDYL-PROLYL CIS/TRANS ISOMERASE"/>
    <property type="match status" value="1"/>
</dbReference>
<dbReference type="PANTHER" id="PTHR30560:SF3">
    <property type="entry name" value="TRIGGER FACTOR-LIKE PROTEIN TIG, CHLOROPLASTIC"/>
    <property type="match status" value="1"/>
</dbReference>
<dbReference type="Pfam" id="PF00254">
    <property type="entry name" value="FKBP_C"/>
    <property type="match status" value="1"/>
</dbReference>
<dbReference type="Pfam" id="PF05698">
    <property type="entry name" value="Trigger_C"/>
    <property type="match status" value="1"/>
</dbReference>
<dbReference type="Pfam" id="PF05697">
    <property type="entry name" value="Trigger_N"/>
    <property type="match status" value="1"/>
</dbReference>
<dbReference type="PIRSF" id="PIRSF003095">
    <property type="entry name" value="Trigger_factor"/>
    <property type="match status" value="1"/>
</dbReference>
<dbReference type="SUPFAM" id="SSF54534">
    <property type="entry name" value="FKBP-like"/>
    <property type="match status" value="1"/>
</dbReference>
<dbReference type="SUPFAM" id="SSF109998">
    <property type="entry name" value="Triger factor/SurA peptide-binding domain-like"/>
    <property type="match status" value="1"/>
</dbReference>
<dbReference type="SUPFAM" id="SSF102735">
    <property type="entry name" value="Trigger factor ribosome-binding domain"/>
    <property type="match status" value="1"/>
</dbReference>
<dbReference type="PROSITE" id="PS50059">
    <property type="entry name" value="FKBP_PPIASE"/>
    <property type="match status" value="1"/>
</dbReference>